<name>TILS_STRP1</name>
<dbReference type="EC" id="6.3.4.19" evidence="1"/>
<dbReference type="EMBL" id="AE004092">
    <property type="protein sequence ID" value="AAK33155.1"/>
    <property type="molecule type" value="Genomic_DNA"/>
</dbReference>
<dbReference type="EMBL" id="CP000017">
    <property type="protein sequence ID" value="AAZ50630.1"/>
    <property type="molecule type" value="Genomic_DNA"/>
</dbReference>
<dbReference type="RefSeq" id="NP_268433.1">
    <property type="nucleotide sequence ID" value="NC_002737.2"/>
</dbReference>
<dbReference type="SMR" id="Q9A201"/>
<dbReference type="PaxDb" id="1314-HKU360_00011"/>
<dbReference type="KEGG" id="spy:SPy_0013"/>
<dbReference type="KEGG" id="spz:M5005_Spy0011"/>
<dbReference type="PATRIC" id="fig|160490.10.peg.12"/>
<dbReference type="HOGENOM" id="CLU_018869_0_2_9"/>
<dbReference type="OMA" id="MLKLNQW"/>
<dbReference type="Proteomes" id="UP000000750">
    <property type="component" value="Chromosome"/>
</dbReference>
<dbReference type="GO" id="GO:0005737">
    <property type="term" value="C:cytoplasm"/>
    <property type="evidence" value="ECO:0007669"/>
    <property type="project" value="UniProtKB-SubCell"/>
</dbReference>
<dbReference type="GO" id="GO:0005524">
    <property type="term" value="F:ATP binding"/>
    <property type="evidence" value="ECO:0007669"/>
    <property type="project" value="UniProtKB-UniRule"/>
</dbReference>
<dbReference type="GO" id="GO:0032267">
    <property type="term" value="F:tRNA(Ile)-lysidine synthase activity"/>
    <property type="evidence" value="ECO:0007669"/>
    <property type="project" value="UniProtKB-EC"/>
</dbReference>
<dbReference type="GO" id="GO:0006400">
    <property type="term" value="P:tRNA modification"/>
    <property type="evidence" value="ECO:0007669"/>
    <property type="project" value="UniProtKB-UniRule"/>
</dbReference>
<dbReference type="CDD" id="cd01992">
    <property type="entry name" value="TilS_N"/>
    <property type="match status" value="1"/>
</dbReference>
<dbReference type="Gene3D" id="3.40.50.620">
    <property type="entry name" value="HUPs"/>
    <property type="match status" value="1"/>
</dbReference>
<dbReference type="HAMAP" id="MF_01161">
    <property type="entry name" value="tRNA_Ile_lys_synt"/>
    <property type="match status" value="1"/>
</dbReference>
<dbReference type="InterPro" id="IPR012796">
    <property type="entry name" value="Lysidine-tRNA-synth_C"/>
</dbReference>
<dbReference type="InterPro" id="IPR014729">
    <property type="entry name" value="Rossmann-like_a/b/a_fold"/>
</dbReference>
<dbReference type="InterPro" id="IPR011063">
    <property type="entry name" value="TilS/TtcA_N"/>
</dbReference>
<dbReference type="InterPro" id="IPR012094">
    <property type="entry name" value="tRNA_Ile_lys_synt"/>
</dbReference>
<dbReference type="InterPro" id="IPR012795">
    <property type="entry name" value="tRNA_Ile_lys_synt_N"/>
</dbReference>
<dbReference type="NCBIfam" id="TIGR02433">
    <property type="entry name" value="lysidine_TilS_C"/>
    <property type="match status" value="1"/>
</dbReference>
<dbReference type="NCBIfam" id="TIGR02432">
    <property type="entry name" value="lysidine_TilS_N"/>
    <property type="match status" value="1"/>
</dbReference>
<dbReference type="PANTHER" id="PTHR43033">
    <property type="entry name" value="TRNA(ILE)-LYSIDINE SYNTHASE-RELATED"/>
    <property type="match status" value="1"/>
</dbReference>
<dbReference type="PANTHER" id="PTHR43033:SF1">
    <property type="entry name" value="TRNA(ILE)-LYSIDINE SYNTHASE-RELATED"/>
    <property type="match status" value="1"/>
</dbReference>
<dbReference type="Pfam" id="PF01171">
    <property type="entry name" value="ATP_bind_3"/>
    <property type="match status" value="1"/>
</dbReference>
<dbReference type="SUPFAM" id="SSF52402">
    <property type="entry name" value="Adenine nucleotide alpha hydrolases-like"/>
    <property type="match status" value="1"/>
</dbReference>
<comment type="function">
    <text evidence="1">Ligates lysine onto the cytidine present at position 34 of the AUA codon-specific tRNA(Ile) that contains the anticodon CAU, in an ATP-dependent manner. Cytidine is converted to lysidine, thus changing the amino acid specificity of the tRNA from methionine to isoleucine.</text>
</comment>
<comment type="catalytic activity">
    <reaction evidence="1">
        <text>cytidine(34) in tRNA(Ile2) + L-lysine + ATP = lysidine(34) in tRNA(Ile2) + AMP + diphosphate + H(+)</text>
        <dbReference type="Rhea" id="RHEA:43744"/>
        <dbReference type="Rhea" id="RHEA-COMP:10625"/>
        <dbReference type="Rhea" id="RHEA-COMP:10670"/>
        <dbReference type="ChEBI" id="CHEBI:15378"/>
        <dbReference type="ChEBI" id="CHEBI:30616"/>
        <dbReference type="ChEBI" id="CHEBI:32551"/>
        <dbReference type="ChEBI" id="CHEBI:33019"/>
        <dbReference type="ChEBI" id="CHEBI:82748"/>
        <dbReference type="ChEBI" id="CHEBI:83665"/>
        <dbReference type="ChEBI" id="CHEBI:456215"/>
        <dbReference type="EC" id="6.3.4.19"/>
    </reaction>
</comment>
<comment type="subcellular location">
    <subcellularLocation>
        <location evidence="1">Cytoplasm</location>
    </subcellularLocation>
</comment>
<comment type="domain">
    <text>The N-terminal region contains the highly conserved SGGXDS motif, predicted to be a P-loop motif involved in ATP binding.</text>
</comment>
<comment type="similarity">
    <text evidence="1">Belongs to the tRNA(Ile)-lysidine synthase family.</text>
</comment>
<proteinExistence type="inferred from homology"/>
<keyword id="KW-0067">ATP-binding</keyword>
<keyword id="KW-0963">Cytoplasm</keyword>
<keyword id="KW-0436">Ligase</keyword>
<keyword id="KW-0547">Nucleotide-binding</keyword>
<keyword id="KW-1185">Reference proteome</keyword>
<keyword id="KW-0819">tRNA processing</keyword>
<sequence>MMTYQEIFNEIKNKAYFKNHRHVLIAVSGGVDSMNLLHFLYLFQDKLKIRIGIAHVNHKQRSESDSEEAYLKCWAKKHDIPIYVSNFEGIFSEKAARDWRYAFFKSIMLKNNYSALVTAHHSDDQAETILMRLIRGSRLRHLSGIKSVQPFANGQLIRPFLTFSKKDLPEIFHFEDSSNRELSFLRNRVRNNYLPLLKQENPRFIQGLNQLALENSLLFQAFKELTNHITTTDLTEFNEQSKSIQYFLLQDYLEGFPDLDLKKSQFTQLLQIIQTAKQGYYYLKKDYYIFIDKFSFKITKIVPKTELVKEEKMLEYDSNLCYRDYYFSFMPKSNEDQGQVSIPLFSLSSIKLRSRQSGDYISFGHFSKKIRRLFIDEKFTIAERQNAIIGEQDEQIIFVLIGNKTYLRKACKHDIMLAKLYIDKLEKG</sequence>
<evidence type="ECO:0000255" key="1">
    <source>
        <dbReference type="HAMAP-Rule" id="MF_01161"/>
    </source>
</evidence>
<gene>
    <name evidence="1" type="primary">tilS</name>
    <name type="ordered locus">SPy_0013</name>
    <name type="ordered locus">M5005_Spy0011</name>
</gene>
<feature type="chain" id="PRO_0000181780" description="tRNA(Ile)-lysidine synthase">
    <location>
        <begin position="1"/>
        <end position="428"/>
    </location>
</feature>
<feature type="binding site" evidence="1">
    <location>
        <begin position="28"/>
        <end position="33"/>
    </location>
    <ligand>
        <name>ATP</name>
        <dbReference type="ChEBI" id="CHEBI:30616"/>
    </ligand>
</feature>
<accession>Q9A201</accession>
<accession>Q491T8</accession>
<reference key="1">
    <citation type="journal article" date="2001" name="Proc. Natl. Acad. Sci. U.S.A.">
        <title>Complete genome sequence of an M1 strain of Streptococcus pyogenes.</title>
        <authorList>
            <person name="Ferretti J.J."/>
            <person name="McShan W.M."/>
            <person name="Ajdic D.J."/>
            <person name="Savic D.J."/>
            <person name="Savic G."/>
            <person name="Lyon K."/>
            <person name="Primeaux C."/>
            <person name="Sezate S."/>
            <person name="Suvorov A.N."/>
            <person name="Kenton S."/>
            <person name="Lai H.S."/>
            <person name="Lin S.P."/>
            <person name="Qian Y."/>
            <person name="Jia H.G."/>
            <person name="Najar F.Z."/>
            <person name="Ren Q."/>
            <person name="Zhu H."/>
            <person name="Song L."/>
            <person name="White J."/>
            <person name="Yuan X."/>
            <person name="Clifton S.W."/>
            <person name="Roe B.A."/>
            <person name="McLaughlin R.E."/>
        </authorList>
    </citation>
    <scope>NUCLEOTIDE SEQUENCE [LARGE SCALE GENOMIC DNA]</scope>
    <source>
        <strain>ATCC 700294 / SF370 / Serotype M1</strain>
    </source>
</reference>
<reference key="2">
    <citation type="journal article" date="2005" name="J. Infect. Dis.">
        <title>Evolutionary origin and emergence of a highly successful clone of serotype M1 group A Streptococcus involved multiple horizontal gene transfer events.</title>
        <authorList>
            <person name="Sumby P."/>
            <person name="Porcella S.F."/>
            <person name="Madrigal A.G."/>
            <person name="Barbian K.D."/>
            <person name="Virtaneva K."/>
            <person name="Ricklefs S.M."/>
            <person name="Sturdevant D.E."/>
            <person name="Graham M.R."/>
            <person name="Vuopio-Varkila J."/>
            <person name="Hoe N.P."/>
            <person name="Musser J.M."/>
        </authorList>
    </citation>
    <scope>NUCLEOTIDE SEQUENCE [LARGE SCALE GENOMIC DNA]</scope>
    <source>
        <strain>ATCC BAA-947 / MGAS5005 / Serotype M1</strain>
    </source>
</reference>
<organism>
    <name type="scientific">Streptococcus pyogenes serotype M1</name>
    <dbReference type="NCBI Taxonomy" id="301447"/>
    <lineage>
        <taxon>Bacteria</taxon>
        <taxon>Bacillati</taxon>
        <taxon>Bacillota</taxon>
        <taxon>Bacilli</taxon>
        <taxon>Lactobacillales</taxon>
        <taxon>Streptococcaceae</taxon>
        <taxon>Streptococcus</taxon>
    </lineage>
</organism>
<protein>
    <recommendedName>
        <fullName evidence="1">tRNA(Ile)-lysidine synthase</fullName>
        <ecNumber evidence="1">6.3.4.19</ecNumber>
    </recommendedName>
    <alternativeName>
        <fullName evidence="1">tRNA(Ile)-2-lysyl-cytidine synthase</fullName>
    </alternativeName>
    <alternativeName>
        <fullName evidence="1">tRNA(Ile)-lysidine synthetase</fullName>
    </alternativeName>
</protein>